<sequence length="286" mass="32963">MADLEEQLSDEEKVRIAAKFIIHAPPGEFNEVFNDVRLLLNNDNLLREGAAHAFAQYNLDQFTPVKIEGYEDQVLITEHGDLGNGKFLDPKNRICFKFDHLRKEATDPRPCEVENAIESWRTSVETALRAYVKEHYPNGVCTVYGKKIDGQQTIIACIESHQFQAKNFWNGRWRSEWKFTITPSTTQVVGILKIQVHYYEDGNVQLVSHKDIQDSLTVSNEVQTAKEFIKIVEAAENEYQTAISENYQTMSDTTFKALRRQLPVTRTKIDWNKILSYKIGKEMQNA</sequence>
<name>CAZA2_AOTNA</name>
<protein>
    <recommendedName>
        <fullName>F-actin-capping protein subunit alpha-2</fullName>
    </recommendedName>
    <alternativeName>
        <fullName>CapZ alpha-2</fullName>
    </alternativeName>
</protein>
<gene>
    <name type="primary">CAPZA2</name>
</gene>
<evidence type="ECO:0000250" key="1"/>
<evidence type="ECO:0000250" key="2">
    <source>
        <dbReference type="UniProtKB" id="P47755"/>
    </source>
</evidence>
<evidence type="ECO:0000305" key="3"/>
<feature type="initiator methionine" description="Removed" evidence="2">
    <location>
        <position position="1"/>
    </location>
</feature>
<feature type="chain" id="PRO_0000260350" description="F-actin-capping protein subunit alpha-2">
    <location>
        <begin position="2"/>
        <end position="286"/>
    </location>
</feature>
<feature type="modified residue" description="N-acetylalanine" evidence="2">
    <location>
        <position position="2"/>
    </location>
</feature>
<feature type="modified residue" description="Phosphoserine" evidence="2">
    <location>
        <position position="9"/>
    </location>
</feature>
<accession>Q07DV7</accession>
<proteinExistence type="inferred from homology"/>
<reference key="1">
    <citation type="submission" date="2006-09" db="EMBL/GenBank/DDBJ databases">
        <title>NISC comparative sequencing initiative.</title>
        <authorList>
            <person name="Antonellis A."/>
            <person name="Ayele K."/>
            <person name="Benjamin B."/>
            <person name="Blakesley R.W."/>
            <person name="Boakye A."/>
            <person name="Bouffard G.G."/>
            <person name="Brinkley C."/>
            <person name="Brooks S."/>
            <person name="Chu G."/>
            <person name="Coleman H."/>
            <person name="Engle J."/>
            <person name="Gestole M."/>
            <person name="Greene A."/>
            <person name="Guan X."/>
            <person name="Gupta J."/>
            <person name="Haghighi P."/>
            <person name="Han J."/>
            <person name="Hansen N."/>
            <person name="Ho S.-L."/>
            <person name="Hu P."/>
            <person name="Hunter G."/>
            <person name="Hurle B."/>
            <person name="Idol J.R."/>
            <person name="Kwong P."/>
            <person name="Laric P."/>
            <person name="Larson S."/>
            <person name="Lee-Lin S.-Q."/>
            <person name="Legaspi R."/>
            <person name="Madden M."/>
            <person name="Maduro Q.L."/>
            <person name="Maduro V.B."/>
            <person name="Margulies E.H."/>
            <person name="Masiello C."/>
            <person name="Maskeri B."/>
            <person name="McDowell J."/>
            <person name="Mojidi H.A."/>
            <person name="Mullikin J.C."/>
            <person name="Oestreicher J.S."/>
            <person name="Park M."/>
            <person name="Portnoy M.E."/>
            <person name="Prasad A."/>
            <person name="Puri O."/>
            <person name="Reddix-Dugue N."/>
            <person name="Schandler K."/>
            <person name="Schueler M.G."/>
            <person name="Sison C."/>
            <person name="Stantripop S."/>
            <person name="Stephen E."/>
            <person name="Taye A."/>
            <person name="Thomas J.W."/>
            <person name="Thomas P.J."/>
            <person name="Tsipouri V."/>
            <person name="Ung L."/>
            <person name="Vogt J.L."/>
            <person name="Wetherby K.D."/>
            <person name="Young A."/>
            <person name="Green E.D."/>
        </authorList>
    </citation>
    <scope>NUCLEOTIDE SEQUENCE [LARGE SCALE GENOMIC DNA]</scope>
</reference>
<comment type="function">
    <text evidence="1">F-actin-capping proteins bind in a Ca(2+)-independent manner to the fast growing ends of actin filaments (barbed end) thereby blocking the exchange of subunits at these ends. Unlike other capping proteins (such as gelsolin and severin), these proteins do not sever actin filaments (By similarity).</text>
</comment>
<comment type="subunit">
    <text evidence="1">Component of the F-actin capping complex, composed of a heterodimer of an alpha and a beta subunit. Component of the WASH complex, composed of F-actin-capping protein subunit alpha (CAPZA1, CAPZA2 or CAPZA3), F-actin-capping protein subunit beta (CAPZB), WASHC1, WASHC2, WASHC3, WASHC4 and WASHC5. Interacts with RCSD1/CAPZIP (By similarity).</text>
</comment>
<comment type="similarity">
    <text evidence="3">Belongs to the F-actin-capping protein alpha subunit family.</text>
</comment>
<organism>
    <name type="scientific">Aotus nancymaae</name>
    <name type="common">Ma's night monkey</name>
    <dbReference type="NCBI Taxonomy" id="37293"/>
    <lineage>
        <taxon>Eukaryota</taxon>
        <taxon>Metazoa</taxon>
        <taxon>Chordata</taxon>
        <taxon>Craniata</taxon>
        <taxon>Vertebrata</taxon>
        <taxon>Euteleostomi</taxon>
        <taxon>Mammalia</taxon>
        <taxon>Eutheria</taxon>
        <taxon>Euarchontoglires</taxon>
        <taxon>Primates</taxon>
        <taxon>Haplorrhini</taxon>
        <taxon>Platyrrhini</taxon>
        <taxon>Aotidae</taxon>
        <taxon>Aotus</taxon>
    </lineage>
</organism>
<dbReference type="EMBL" id="DP000197">
    <property type="protein sequence ID" value="ABJ08885.1"/>
    <property type="molecule type" value="Genomic_DNA"/>
</dbReference>
<dbReference type="RefSeq" id="XP_021529088.2">
    <property type="nucleotide sequence ID" value="XM_021673413.2"/>
</dbReference>
<dbReference type="SMR" id="Q07DV7"/>
<dbReference type="STRING" id="37293.ENSANAP00000030465"/>
<dbReference type="GeneID" id="105720420"/>
<dbReference type="Proteomes" id="UP000233020">
    <property type="component" value="Whole Genome Shotgun Assembly"/>
</dbReference>
<dbReference type="GO" id="GO:0030863">
    <property type="term" value="C:cortical cytoskeleton"/>
    <property type="evidence" value="ECO:0007669"/>
    <property type="project" value="TreeGrafter"/>
</dbReference>
<dbReference type="GO" id="GO:0008290">
    <property type="term" value="C:F-actin capping protein complex"/>
    <property type="evidence" value="ECO:0007669"/>
    <property type="project" value="InterPro"/>
</dbReference>
<dbReference type="GO" id="GO:0051015">
    <property type="term" value="F:actin filament binding"/>
    <property type="evidence" value="ECO:0007669"/>
    <property type="project" value="TreeGrafter"/>
</dbReference>
<dbReference type="GO" id="GO:0030036">
    <property type="term" value="P:actin cytoskeleton organization"/>
    <property type="evidence" value="ECO:0007669"/>
    <property type="project" value="TreeGrafter"/>
</dbReference>
<dbReference type="GO" id="GO:0051016">
    <property type="term" value="P:barbed-end actin filament capping"/>
    <property type="evidence" value="ECO:0007669"/>
    <property type="project" value="InterPro"/>
</dbReference>
<dbReference type="FunFam" id="3.30.1140.60:FF:000001">
    <property type="entry name" value="F-actin-capping protein subunit alpha"/>
    <property type="match status" value="1"/>
</dbReference>
<dbReference type="FunFam" id="3.90.1150.210:FF:000002">
    <property type="entry name" value="F-actin-capping protein subunit alpha"/>
    <property type="match status" value="1"/>
</dbReference>
<dbReference type="Gene3D" id="3.30.1140.60">
    <property type="entry name" value="F-actin capping protein, alpha subunit"/>
    <property type="match status" value="1"/>
</dbReference>
<dbReference type="Gene3D" id="3.90.1150.210">
    <property type="entry name" value="F-actin capping protein, beta subunit"/>
    <property type="match status" value="1"/>
</dbReference>
<dbReference type="InterPro" id="IPR002189">
    <property type="entry name" value="CapZ_alpha"/>
</dbReference>
<dbReference type="InterPro" id="IPR037282">
    <property type="entry name" value="CapZ_alpha/beta"/>
</dbReference>
<dbReference type="InterPro" id="IPR042276">
    <property type="entry name" value="CapZ_alpha/beta_2"/>
</dbReference>
<dbReference type="InterPro" id="IPR042489">
    <property type="entry name" value="CapZ_alpha_1"/>
</dbReference>
<dbReference type="InterPro" id="IPR017865">
    <property type="entry name" value="F-actin_cap_asu_CS"/>
</dbReference>
<dbReference type="PANTHER" id="PTHR10653">
    <property type="entry name" value="F-ACTIN-CAPPING PROTEIN SUBUNIT ALPHA"/>
    <property type="match status" value="1"/>
</dbReference>
<dbReference type="PANTHER" id="PTHR10653:SF2">
    <property type="entry name" value="F-ACTIN-CAPPING PROTEIN SUBUNIT ALPHA-2"/>
    <property type="match status" value="1"/>
</dbReference>
<dbReference type="Pfam" id="PF01267">
    <property type="entry name" value="F-actin_cap_A"/>
    <property type="match status" value="1"/>
</dbReference>
<dbReference type="PRINTS" id="PR00191">
    <property type="entry name" value="FACTINCAPA"/>
</dbReference>
<dbReference type="SUPFAM" id="SSF90096">
    <property type="entry name" value="Subunits of heterodimeric actin filament capping protein Capz"/>
    <property type="match status" value="1"/>
</dbReference>
<dbReference type="PROSITE" id="PS00748">
    <property type="entry name" value="F_ACTIN_CAPPING_A_1"/>
    <property type="match status" value="1"/>
</dbReference>
<dbReference type="PROSITE" id="PS00749">
    <property type="entry name" value="F_ACTIN_CAPPING_A_2"/>
    <property type="match status" value="1"/>
</dbReference>
<keyword id="KW-0007">Acetylation</keyword>
<keyword id="KW-0117">Actin capping</keyword>
<keyword id="KW-0009">Actin-binding</keyword>
<keyword id="KW-0597">Phosphoprotein</keyword>
<keyword id="KW-1185">Reference proteome</keyword>